<evidence type="ECO:0000255" key="1">
    <source>
        <dbReference type="HAMAP-Rule" id="MF_00318"/>
    </source>
</evidence>
<evidence type="ECO:0000303" key="2">
    <source ref="2"/>
</evidence>
<evidence type="ECO:0007744" key="3">
    <source>
        <dbReference type="PDB" id="3QN3"/>
    </source>
</evidence>
<evidence type="ECO:0007829" key="4">
    <source>
        <dbReference type="PDB" id="3QN3"/>
    </source>
</evidence>
<dbReference type="EC" id="4.2.1.11" evidence="1"/>
<dbReference type="EMBL" id="AL111168">
    <property type="protein sequence ID" value="CAL35768.1"/>
    <property type="molecule type" value="Genomic_DNA"/>
</dbReference>
<dbReference type="PIR" id="E81264">
    <property type="entry name" value="E81264"/>
</dbReference>
<dbReference type="RefSeq" id="WP_002851519.1">
    <property type="nucleotide sequence ID" value="NZ_SZUC01000002.1"/>
</dbReference>
<dbReference type="RefSeq" id="YP_002345040.1">
    <property type="nucleotide sequence ID" value="NC_002163.1"/>
</dbReference>
<dbReference type="PDB" id="3QN3">
    <property type="method" value="X-ray"/>
    <property type="resolution" value="2.13 A"/>
    <property type="chains" value="A/B/C/D=1-414"/>
</dbReference>
<dbReference type="PDBsum" id="3QN3"/>
<dbReference type="SMR" id="P42448"/>
<dbReference type="IntAct" id="P42448">
    <property type="interactions" value="31"/>
</dbReference>
<dbReference type="STRING" id="192222.Cj1672c"/>
<dbReference type="PaxDb" id="192222-Cj1672c"/>
<dbReference type="EnsemblBacteria" id="CAL35768">
    <property type="protein sequence ID" value="CAL35768"/>
    <property type="gene ID" value="Cj1672c"/>
</dbReference>
<dbReference type="GeneID" id="905947"/>
<dbReference type="KEGG" id="cje:Cj1672c"/>
<dbReference type="PATRIC" id="fig|192222.6.peg.1647"/>
<dbReference type="eggNOG" id="COG0148">
    <property type="taxonomic scope" value="Bacteria"/>
</dbReference>
<dbReference type="HOGENOM" id="CLU_031223_2_1_7"/>
<dbReference type="OrthoDB" id="9804716at2"/>
<dbReference type="UniPathway" id="UPA00109">
    <property type="reaction ID" value="UER00187"/>
</dbReference>
<dbReference type="EvolutionaryTrace" id="P42448"/>
<dbReference type="Proteomes" id="UP000000799">
    <property type="component" value="Chromosome"/>
</dbReference>
<dbReference type="GO" id="GO:0009986">
    <property type="term" value="C:cell surface"/>
    <property type="evidence" value="ECO:0007669"/>
    <property type="project" value="UniProtKB-SubCell"/>
</dbReference>
<dbReference type="GO" id="GO:0005576">
    <property type="term" value="C:extracellular region"/>
    <property type="evidence" value="ECO:0007669"/>
    <property type="project" value="UniProtKB-SubCell"/>
</dbReference>
<dbReference type="GO" id="GO:0000015">
    <property type="term" value="C:phosphopyruvate hydratase complex"/>
    <property type="evidence" value="ECO:0007669"/>
    <property type="project" value="InterPro"/>
</dbReference>
<dbReference type="GO" id="GO:0000287">
    <property type="term" value="F:magnesium ion binding"/>
    <property type="evidence" value="ECO:0007669"/>
    <property type="project" value="UniProtKB-UniRule"/>
</dbReference>
<dbReference type="GO" id="GO:0004634">
    <property type="term" value="F:phosphopyruvate hydratase activity"/>
    <property type="evidence" value="ECO:0007669"/>
    <property type="project" value="UniProtKB-UniRule"/>
</dbReference>
<dbReference type="GO" id="GO:0006096">
    <property type="term" value="P:glycolytic process"/>
    <property type="evidence" value="ECO:0007669"/>
    <property type="project" value="UniProtKB-UniRule"/>
</dbReference>
<dbReference type="CDD" id="cd03313">
    <property type="entry name" value="enolase"/>
    <property type="match status" value="1"/>
</dbReference>
<dbReference type="Gene3D" id="3.20.20.120">
    <property type="entry name" value="Enolase-like C-terminal domain"/>
    <property type="match status" value="1"/>
</dbReference>
<dbReference type="Gene3D" id="3.30.390.10">
    <property type="entry name" value="Enolase-like, N-terminal domain"/>
    <property type="match status" value="1"/>
</dbReference>
<dbReference type="HAMAP" id="MF_00318">
    <property type="entry name" value="Enolase"/>
    <property type="match status" value="1"/>
</dbReference>
<dbReference type="InterPro" id="IPR000941">
    <property type="entry name" value="Enolase"/>
</dbReference>
<dbReference type="InterPro" id="IPR036849">
    <property type="entry name" value="Enolase-like_C_sf"/>
</dbReference>
<dbReference type="InterPro" id="IPR029017">
    <property type="entry name" value="Enolase-like_N"/>
</dbReference>
<dbReference type="InterPro" id="IPR020810">
    <property type="entry name" value="Enolase_C"/>
</dbReference>
<dbReference type="InterPro" id="IPR020809">
    <property type="entry name" value="Enolase_CS"/>
</dbReference>
<dbReference type="InterPro" id="IPR020811">
    <property type="entry name" value="Enolase_N"/>
</dbReference>
<dbReference type="NCBIfam" id="TIGR01060">
    <property type="entry name" value="eno"/>
    <property type="match status" value="1"/>
</dbReference>
<dbReference type="PANTHER" id="PTHR11902">
    <property type="entry name" value="ENOLASE"/>
    <property type="match status" value="1"/>
</dbReference>
<dbReference type="PANTHER" id="PTHR11902:SF1">
    <property type="entry name" value="ENOLASE"/>
    <property type="match status" value="1"/>
</dbReference>
<dbReference type="Pfam" id="PF00113">
    <property type="entry name" value="Enolase_C"/>
    <property type="match status" value="1"/>
</dbReference>
<dbReference type="Pfam" id="PF03952">
    <property type="entry name" value="Enolase_N"/>
    <property type="match status" value="1"/>
</dbReference>
<dbReference type="PIRSF" id="PIRSF001400">
    <property type="entry name" value="Enolase"/>
    <property type="match status" value="1"/>
</dbReference>
<dbReference type="PRINTS" id="PR00148">
    <property type="entry name" value="ENOLASE"/>
</dbReference>
<dbReference type="SFLD" id="SFLDS00001">
    <property type="entry name" value="Enolase"/>
    <property type="match status" value="1"/>
</dbReference>
<dbReference type="SFLD" id="SFLDF00002">
    <property type="entry name" value="enolase"/>
    <property type="match status" value="1"/>
</dbReference>
<dbReference type="SMART" id="SM01192">
    <property type="entry name" value="Enolase_C"/>
    <property type="match status" value="1"/>
</dbReference>
<dbReference type="SMART" id="SM01193">
    <property type="entry name" value="Enolase_N"/>
    <property type="match status" value="1"/>
</dbReference>
<dbReference type="SUPFAM" id="SSF51604">
    <property type="entry name" value="Enolase C-terminal domain-like"/>
    <property type="match status" value="1"/>
</dbReference>
<dbReference type="SUPFAM" id="SSF54826">
    <property type="entry name" value="Enolase N-terminal domain-like"/>
    <property type="match status" value="1"/>
</dbReference>
<dbReference type="PROSITE" id="PS00164">
    <property type="entry name" value="ENOLASE"/>
    <property type="match status" value="1"/>
</dbReference>
<proteinExistence type="evidence at protein level"/>
<keyword id="KW-0002">3D-structure</keyword>
<keyword id="KW-0963">Cytoplasm</keyword>
<keyword id="KW-0324">Glycolysis</keyword>
<keyword id="KW-0456">Lyase</keyword>
<keyword id="KW-0460">Magnesium</keyword>
<keyword id="KW-0479">Metal-binding</keyword>
<keyword id="KW-1185">Reference proteome</keyword>
<keyword id="KW-0964">Secreted</keyword>
<reference key="1">
    <citation type="journal article" date="2000" name="Nature">
        <title>The genome sequence of the food-borne pathogen Campylobacter jejuni reveals hypervariable sequences.</title>
        <authorList>
            <person name="Parkhill J."/>
            <person name="Wren B.W."/>
            <person name="Mungall K.L."/>
            <person name="Ketley J.M."/>
            <person name="Churcher C.M."/>
            <person name="Basham D."/>
            <person name="Chillingworth T."/>
            <person name="Davies R.M."/>
            <person name="Feltwell T."/>
            <person name="Holroyd S."/>
            <person name="Jagels K."/>
            <person name="Karlyshev A.V."/>
            <person name="Moule S."/>
            <person name="Pallen M.J."/>
            <person name="Penn C.W."/>
            <person name="Quail M.A."/>
            <person name="Rajandream M.A."/>
            <person name="Rutherford K.M."/>
            <person name="van Vliet A.H.M."/>
            <person name="Whitehead S."/>
            <person name="Barrell B.G."/>
        </authorList>
    </citation>
    <scope>NUCLEOTIDE SEQUENCE [LARGE SCALE GENOMIC DNA]</scope>
    <source>
        <strain>ATCC 700819 / NCTC 11168</strain>
    </source>
</reference>
<reference evidence="3" key="2">
    <citation type="submission" date="2011-02" db="PDB data bank">
        <title>Phosphopyruvate hydratase from Campylobacter jejuni.</title>
        <authorList>
            <person name="Osipiuk J."/>
            <person name="Gu M."/>
            <person name="Kwon K."/>
            <person name="Anderson W.F."/>
            <person name="Joachimiak A."/>
        </authorList>
    </citation>
    <scope>X-RAY CRYSTALLOGRAPHY (2.13 ANGSTROMS) IN COMPLEX WITH MG(2+)</scope>
</reference>
<gene>
    <name evidence="1" type="primary">eno</name>
    <name type="ordered locus">Cj1672c</name>
</gene>
<sequence length="414" mass="44939">MLVIEDVRAYEVLDSRGNPTVKAEVTLSDGSVGAAIVPSGASTGSKEALELRDNDERFGGKGVLKAVANVNETIADEILGLDAFNQTQLDDTLRELDGTNNYSNLGANATLGVSMATARAAAAALGMPLYRYLGGANASILPVPMCNIINGGAHANNNVDFQEFMIMPFGFTSFKEALRSVCEIYAILKKELANSGHSTALGDEGGFAPNLANNTEPIDLLMTCIKKAGYENRVKIALDVASTEFFKDGKYHMEGKAFSSEALIERYVELCAKYPICSIEDGLAENDFEGWIKLTEKLGNKIQLVGDDLFVTNEDILREGIIKKMANAVLIKPNQIGTITQTMRTVRLAQRNNYKCVMSHRSGESEDAFIADFAVALNTGQIKTGALARGERTAKYNRLLEIEFESDEYLGEKL</sequence>
<comment type="function">
    <text evidence="1">Catalyzes the reversible conversion of 2-phosphoglycerate (2-PG) into phosphoenolpyruvate (PEP). It is essential for the degradation of carbohydrates via glycolysis.</text>
</comment>
<comment type="catalytic activity">
    <reaction evidence="1">
        <text>(2R)-2-phosphoglycerate = phosphoenolpyruvate + H2O</text>
        <dbReference type="Rhea" id="RHEA:10164"/>
        <dbReference type="ChEBI" id="CHEBI:15377"/>
        <dbReference type="ChEBI" id="CHEBI:58289"/>
        <dbReference type="ChEBI" id="CHEBI:58702"/>
        <dbReference type="EC" id="4.2.1.11"/>
    </reaction>
</comment>
<comment type="cofactor">
    <cofactor evidence="1 3">
        <name>Mg(2+)</name>
        <dbReference type="ChEBI" id="CHEBI:18420"/>
    </cofactor>
    <text evidence="1">Binds a second Mg(2+) ion via substrate during catalysis.</text>
</comment>
<comment type="pathway">
    <text evidence="1">Carbohydrate degradation; glycolysis; pyruvate from D-glyceraldehyde 3-phosphate: step 4/5.</text>
</comment>
<comment type="subcellular location">
    <subcellularLocation>
        <location evidence="1">Cytoplasm</location>
    </subcellularLocation>
    <subcellularLocation>
        <location evidence="1">Secreted</location>
    </subcellularLocation>
    <subcellularLocation>
        <location evidence="1">Cell surface</location>
    </subcellularLocation>
    <text evidence="1">Fractions of enolase are present in both the cytoplasm and on the cell surface.</text>
</comment>
<comment type="similarity">
    <text evidence="1">Belongs to the enolase family.</text>
</comment>
<feature type="chain" id="PRO_0000133861" description="Enolase">
    <location>
        <begin position="1"/>
        <end position="414"/>
    </location>
</feature>
<feature type="active site" description="Proton donor" evidence="1">
    <location>
        <position position="204"/>
    </location>
</feature>
<feature type="active site" description="Proton acceptor" evidence="1">
    <location>
        <position position="332"/>
    </location>
</feature>
<feature type="binding site" evidence="1">
    <location>
        <position position="162"/>
    </location>
    <ligand>
        <name>(2R)-2-phosphoglycerate</name>
        <dbReference type="ChEBI" id="CHEBI:58289"/>
    </ligand>
</feature>
<feature type="binding site" evidence="1 3">
    <location>
        <position position="239"/>
    </location>
    <ligand>
        <name>Mg(2+)</name>
        <dbReference type="ChEBI" id="CHEBI:18420"/>
    </ligand>
</feature>
<feature type="binding site" evidence="1 3">
    <location>
        <position position="280"/>
    </location>
    <ligand>
        <name>Mg(2+)</name>
        <dbReference type="ChEBI" id="CHEBI:18420"/>
    </ligand>
</feature>
<feature type="binding site" evidence="1 3">
    <location>
        <position position="307"/>
    </location>
    <ligand>
        <name>Mg(2+)</name>
        <dbReference type="ChEBI" id="CHEBI:18420"/>
    </ligand>
</feature>
<feature type="binding site" evidence="1">
    <location>
        <position position="332"/>
    </location>
    <ligand>
        <name>(2R)-2-phosphoglycerate</name>
        <dbReference type="ChEBI" id="CHEBI:58289"/>
    </ligand>
</feature>
<feature type="binding site" evidence="1">
    <location>
        <position position="361"/>
    </location>
    <ligand>
        <name>(2R)-2-phosphoglycerate</name>
        <dbReference type="ChEBI" id="CHEBI:58289"/>
    </ligand>
</feature>
<feature type="binding site" evidence="1">
    <location>
        <position position="362"/>
    </location>
    <ligand>
        <name>(2R)-2-phosphoglycerate</name>
        <dbReference type="ChEBI" id="CHEBI:58289"/>
    </ligand>
</feature>
<feature type="binding site" evidence="1">
    <location>
        <position position="383"/>
    </location>
    <ligand>
        <name>(2R)-2-phosphoglycerate</name>
        <dbReference type="ChEBI" id="CHEBI:58289"/>
    </ligand>
</feature>
<feature type="strand" evidence="4">
    <location>
        <begin position="2"/>
        <end position="13"/>
    </location>
</feature>
<feature type="strand" evidence="4">
    <location>
        <begin position="19"/>
        <end position="27"/>
    </location>
</feature>
<feature type="strand" evidence="4">
    <location>
        <begin position="32"/>
        <end position="36"/>
    </location>
</feature>
<feature type="strand" evidence="4">
    <location>
        <begin position="41"/>
        <end position="43"/>
    </location>
</feature>
<feature type="strand" evidence="4">
    <location>
        <begin position="45"/>
        <end position="47"/>
    </location>
</feature>
<feature type="helix" evidence="4">
    <location>
        <begin position="57"/>
        <end position="60"/>
    </location>
</feature>
<feature type="helix" evidence="4">
    <location>
        <begin position="64"/>
        <end position="71"/>
    </location>
</feature>
<feature type="helix" evidence="4">
    <location>
        <begin position="73"/>
        <end position="78"/>
    </location>
</feature>
<feature type="helix" evidence="4">
    <location>
        <begin position="86"/>
        <end position="97"/>
    </location>
</feature>
<feature type="strand" evidence="4">
    <location>
        <begin position="99"/>
        <end position="101"/>
    </location>
</feature>
<feature type="turn" evidence="4">
    <location>
        <begin position="103"/>
        <end position="105"/>
    </location>
</feature>
<feature type="helix" evidence="4">
    <location>
        <begin position="107"/>
        <end position="124"/>
    </location>
</feature>
<feature type="helix" evidence="4">
    <location>
        <begin position="129"/>
        <end position="134"/>
    </location>
</feature>
<feature type="helix" evidence="4">
    <location>
        <begin position="135"/>
        <end position="137"/>
    </location>
</feature>
<feature type="strand" evidence="4">
    <location>
        <begin position="146"/>
        <end position="150"/>
    </location>
</feature>
<feature type="helix" evidence="4">
    <location>
        <begin position="152"/>
        <end position="154"/>
    </location>
</feature>
<feature type="strand" evidence="4">
    <location>
        <begin position="155"/>
        <end position="158"/>
    </location>
</feature>
<feature type="strand" evidence="4">
    <location>
        <begin position="162"/>
        <end position="168"/>
    </location>
</feature>
<feature type="helix" evidence="4">
    <location>
        <begin position="174"/>
        <end position="194"/>
    </location>
</feature>
<feature type="strand" evidence="4">
    <location>
        <begin position="212"/>
        <end position="215"/>
    </location>
</feature>
<feature type="helix" evidence="4">
    <location>
        <begin position="216"/>
        <end position="227"/>
    </location>
</feature>
<feature type="turn" evidence="4">
    <location>
        <begin position="231"/>
        <end position="233"/>
    </location>
</feature>
<feature type="strand" evidence="4">
    <location>
        <begin position="234"/>
        <end position="239"/>
    </location>
</feature>
<feature type="helix" evidence="4">
    <location>
        <begin position="242"/>
        <end position="245"/>
    </location>
</feature>
<feature type="strand" evidence="4">
    <location>
        <begin position="250"/>
        <end position="253"/>
    </location>
</feature>
<feature type="strand" evidence="4">
    <location>
        <begin position="256"/>
        <end position="258"/>
    </location>
</feature>
<feature type="helix" evidence="4">
    <location>
        <begin position="260"/>
        <end position="273"/>
    </location>
</feature>
<feature type="strand" evidence="4">
    <location>
        <begin position="276"/>
        <end position="283"/>
    </location>
</feature>
<feature type="helix" evidence="4">
    <location>
        <begin position="288"/>
        <end position="298"/>
    </location>
</feature>
<feature type="turn" evidence="4">
    <location>
        <begin position="299"/>
        <end position="301"/>
    </location>
</feature>
<feature type="strand" evidence="4">
    <location>
        <begin position="302"/>
        <end position="307"/>
    </location>
</feature>
<feature type="turn" evidence="4">
    <location>
        <begin position="308"/>
        <end position="312"/>
    </location>
</feature>
<feature type="helix" evidence="4">
    <location>
        <begin position="314"/>
        <end position="323"/>
    </location>
</feature>
<feature type="strand" evidence="4">
    <location>
        <begin position="327"/>
        <end position="331"/>
    </location>
</feature>
<feature type="helix" evidence="4">
    <location>
        <begin position="333"/>
        <end position="336"/>
    </location>
</feature>
<feature type="helix" evidence="4">
    <location>
        <begin position="339"/>
        <end position="351"/>
    </location>
</feature>
<feature type="strand" evidence="4">
    <location>
        <begin position="355"/>
        <end position="359"/>
    </location>
</feature>
<feature type="helix" evidence="4">
    <location>
        <begin position="369"/>
        <end position="376"/>
    </location>
</feature>
<feature type="strand" evidence="4">
    <location>
        <begin position="380"/>
        <end position="383"/>
    </location>
</feature>
<feature type="helix" evidence="4">
    <location>
        <begin position="390"/>
        <end position="402"/>
    </location>
</feature>
<feature type="turn" evidence="4">
    <location>
        <begin position="403"/>
        <end position="405"/>
    </location>
</feature>
<protein>
    <recommendedName>
        <fullName evidence="1">Enolase</fullName>
        <ecNumber evidence="1">4.2.1.11</ecNumber>
    </recommendedName>
    <alternativeName>
        <fullName evidence="1">2-phospho-D-glycerate hydro-lyase</fullName>
    </alternativeName>
    <alternativeName>
        <fullName evidence="1">2-phosphoglycerate dehydratase</fullName>
    </alternativeName>
    <alternativeName>
        <fullName evidence="2">Phosphopyruvate hydratase</fullName>
    </alternativeName>
</protein>
<accession>P42448</accession>
<accession>Q0P7V7</accession>
<accession>Q9PM05</accession>
<name>ENO_CAMJE</name>
<organism>
    <name type="scientific">Campylobacter jejuni subsp. jejuni serotype O:2 (strain ATCC 700819 / NCTC 11168)</name>
    <dbReference type="NCBI Taxonomy" id="192222"/>
    <lineage>
        <taxon>Bacteria</taxon>
        <taxon>Pseudomonadati</taxon>
        <taxon>Campylobacterota</taxon>
        <taxon>Epsilonproteobacteria</taxon>
        <taxon>Campylobacterales</taxon>
        <taxon>Campylobacteraceae</taxon>
        <taxon>Campylobacter</taxon>
    </lineage>
</organism>